<feature type="chain" id="PRO_1000083615" description="Protein ApaG">
    <location>
        <begin position="1"/>
        <end position="127"/>
    </location>
</feature>
<feature type="domain" description="ApaG" evidence="1">
    <location>
        <begin position="3"/>
        <end position="127"/>
    </location>
</feature>
<name>APAG_DECAR</name>
<reference key="1">
    <citation type="journal article" date="2009" name="BMC Genomics">
        <title>Metabolic analysis of the soil microbe Dechloromonas aromatica str. RCB: indications of a surprisingly complex life-style and cryptic anaerobic pathways for aromatic degradation.</title>
        <authorList>
            <person name="Salinero K.K."/>
            <person name="Keller K."/>
            <person name="Feil W.S."/>
            <person name="Feil H."/>
            <person name="Trong S."/>
            <person name="Di Bartolo G."/>
            <person name="Lapidus A."/>
        </authorList>
    </citation>
    <scope>NUCLEOTIDE SEQUENCE [LARGE SCALE GENOMIC DNA]</scope>
    <source>
        <strain>RCB</strain>
    </source>
</reference>
<protein>
    <recommendedName>
        <fullName evidence="1">Protein ApaG</fullName>
    </recommendedName>
</protein>
<dbReference type="EMBL" id="CP000089">
    <property type="protein sequence ID" value="AAZ48213.1"/>
    <property type="molecule type" value="Genomic_DNA"/>
</dbReference>
<dbReference type="SMR" id="Q47AB8"/>
<dbReference type="STRING" id="159087.Daro_3484"/>
<dbReference type="KEGG" id="dar:Daro_3484"/>
<dbReference type="eggNOG" id="COG2967">
    <property type="taxonomic scope" value="Bacteria"/>
</dbReference>
<dbReference type="HOGENOM" id="CLU_128074_0_0_4"/>
<dbReference type="OrthoDB" id="9795226at2"/>
<dbReference type="GO" id="GO:0070987">
    <property type="term" value="P:error-free translesion synthesis"/>
    <property type="evidence" value="ECO:0007669"/>
    <property type="project" value="TreeGrafter"/>
</dbReference>
<dbReference type="Gene3D" id="2.60.40.1470">
    <property type="entry name" value="ApaG domain"/>
    <property type="match status" value="1"/>
</dbReference>
<dbReference type="HAMAP" id="MF_00791">
    <property type="entry name" value="ApaG"/>
    <property type="match status" value="1"/>
</dbReference>
<dbReference type="InterPro" id="IPR007474">
    <property type="entry name" value="ApaG_domain"/>
</dbReference>
<dbReference type="InterPro" id="IPR036767">
    <property type="entry name" value="ApaG_sf"/>
</dbReference>
<dbReference type="InterPro" id="IPR023065">
    <property type="entry name" value="Uncharacterised_ApaG"/>
</dbReference>
<dbReference type="NCBIfam" id="NF003967">
    <property type="entry name" value="PRK05461.1"/>
    <property type="match status" value="1"/>
</dbReference>
<dbReference type="PANTHER" id="PTHR14289">
    <property type="entry name" value="F-BOX ONLY PROTEIN 3"/>
    <property type="match status" value="1"/>
</dbReference>
<dbReference type="PANTHER" id="PTHR14289:SF16">
    <property type="entry name" value="POLYMERASE DELTA-INTERACTING PROTEIN 2"/>
    <property type="match status" value="1"/>
</dbReference>
<dbReference type="Pfam" id="PF04379">
    <property type="entry name" value="DUF525"/>
    <property type="match status" value="1"/>
</dbReference>
<dbReference type="SUPFAM" id="SSF110069">
    <property type="entry name" value="ApaG-like"/>
    <property type="match status" value="1"/>
</dbReference>
<dbReference type="PROSITE" id="PS51087">
    <property type="entry name" value="APAG"/>
    <property type="match status" value="1"/>
</dbReference>
<accession>Q47AB8</accession>
<sequence>MSDTNKYRIEVQPMPQFIPEQSDPENDRYIFAYTITIKNIGEVPAQLVSRHWIITDGNNEVQEVRGLGVVGKQPLLQPGESFQYTSGSSLTTAIGTMKGTYQMVAEDGTHFEAEIPEFVLASPRALH</sequence>
<proteinExistence type="inferred from homology"/>
<gene>
    <name evidence="1" type="primary">apaG</name>
    <name type="ordered locus">Daro_3484</name>
</gene>
<evidence type="ECO:0000255" key="1">
    <source>
        <dbReference type="HAMAP-Rule" id="MF_00791"/>
    </source>
</evidence>
<organism>
    <name type="scientific">Dechloromonas aromatica (strain RCB)</name>
    <dbReference type="NCBI Taxonomy" id="159087"/>
    <lineage>
        <taxon>Bacteria</taxon>
        <taxon>Pseudomonadati</taxon>
        <taxon>Pseudomonadota</taxon>
        <taxon>Betaproteobacteria</taxon>
        <taxon>Rhodocyclales</taxon>
        <taxon>Azonexaceae</taxon>
        <taxon>Dechloromonas</taxon>
    </lineage>
</organism>